<comment type="function">
    <text evidence="1">PPIases accelerate the folding of proteins. It catalyzes the cis-trans isomerization of proline imidic peptide bonds in oligopeptides (By similarity).</text>
</comment>
<comment type="catalytic activity">
    <reaction>
        <text>[protein]-peptidylproline (omega=180) = [protein]-peptidylproline (omega=0)</text>
        <dbReference type="Rhea" id="RHEA:16237"/>
        <dbReference type="Rhea" id="RHEA-COMP:10747"/>
        <dbReference type="Rhea" id="RHEA-COMP:10748"/>
        <dbReference type="ChEBI" id="CHEBI:83833"/>
        <dbReference type="ChEBI" id="CHEBI:83834"/>
        <dbReference type="EC" id="5.2.1.8"/>
    </reaction>
</comment>
<comment type="similarity">
    <text evidence="3">Belongs to the cyclophilin-type PPIase family.</text>
</comment>
<evidence type="ECO:0000250" key="1"/>
<evidence type="ECO:0000255" key="2">
    <source>
        <dbReference type="PROSITE-ProRule" id="PRU00156"/>
    </source>
</evidence>
<evidence type="ECO:0000305" key="3"/>
<sequence length="197" mass="21619">MANYPQLNKEVQQGEIKVVMHTNKGDMTFKLFPNIAPKTVENFVTHAKNGYYDGITFHRVINDFMIQGGDPTATGMGGESIYGGAFEDEFSLNAFNLYGALSMANSGPNTNGSQFFIVQMKEVPQNMLSQLADGGWPQPIVDAYGEKGGTPWLDQKHTVFGQIIDGETTLEDIANTKVGPQDKPLHDVVIESIDVEE</sequence>
<keyword id="KW-0413">Isomerase</keyword>
<keyword id="KW-0697">Rotamase</keyword>
<organism>
    <name type="scientific">Staphylococcus aureus (strain N315)</name>
    <dbReference type="NCBI Taxonomy" id="158879"/>
    <lineage>
        <taxon>Bacteria</taxon>
        <taxon>Bacillati</taxon>
        <taxon>Bacillota</taxon>
        <taxon>Bacilli</taxon>
        <taxon>Bacillales</taxon>
        <taxon>Staphylococcaceae</taxon>
        <taxon>Staphylococcus</taxon>
    </lineage>
</organism>
<reference key="1">
    <citation type="journal article" date="2001" name="Lancet">
        <title>Whole genome sequencing of meticillin-resistant Staphylococcus aureus.</title>
        <authorList>
            <person name="Kuroda M."/>
            <person name="Ohta T."/>
            <person name="Uchiyama I."/>
            <person name="Baba T."/>
            <person name="Yuzawa H."/>
            <person name="Kobayashi I."/>
            <person name="Cui L."/>
            <person name="Oguchi A."/>
            <person name="Aoki K."/>
            <person name="Nagai Y."/>
            <person name="Lian J.-Q."/>
            <person name="Ito T."/>
            <person name="Kanamori M."/>
            <person name="Matsumaru H."/>
            <person name="Maruyama A."/>
            <person name="Murakami H."/>
            <person name="Hosoyama A."/>
            <person name="Mizutani-Ui Y."/>
            <person name="Takahashi N.K."/>
            <person name="Sawano T."/>
            <person name="Inoue R."/>
            <person name="Kaito C."/>
            <person name="Sekimizu K."/>
            <person name="Hirakawa H."/>
            <person name="Kuhara S."/>
            <person name="Goto S."/>
            <person name="Yabuzaki J."/>
            <person name="Kanehisa M."/>
            <person name="Yamashita A."/>
            <person name="Oshima K."/>
            <person name="Furuya K."/>
            <person name="Yoshino C."/>
            <person name="Shiba T."/>
            <person name="Hattori M."/>
            <person name="Ogasawara N."/>
            <person name="Hayashi H."/>
            <person name="Hiramatsu K."/>
        </authorList>
    </citation>
    <scope>NUCLEOTIDE SEQUENCE [LARGE SCALE GENOMIC DNA]</scope>
    <source>
        <strain>N315</strain>
    </source>
</reference>
<reference key="2">
    <citation type="journal article" date="2005" name="J. Microbiol. Methods">
        <title>Correlation of proteomic and transcriptomic profiles of Staphylococcus aureus during the post-exponential phase of growth.</title>
        <authorList>
            <person name="Scherl A."/>
            <person name="Francois P."/>
            <person name="Bento M."/>
            <person name="Deshusses J.M."/>
            <person name="Charbonnier Y."/>
            <person name="Converset V."/>
            <person name="Huyghe A."/>
            <person name="Walter N."/>
            <person name="Hoogland C."/>
            <person name="Appel R.D."/>
            <person name="Sanchez J.-C."/>
            <person name="Zimmermann-Ivol C.G."/>
            <person name="Corthals G.L."/>
            <person name="Hochstrasser D.F."/>
            <person name="Schrenzel J."/>
        </authorList>
    </citation>
    <scope>IDENTIFICATION BY MASS SPECTROMETRY</scope>
    <source>
        <strain>N315</strain>
    </source>
</reference>
<reference key="3">
    <citation type="submission" date="2007-10" db="UniProtKB">
        <title>Shotgun proteomic analysis of total and membrane protein extracts of S. aureus strain N315.</title>
        <authorList>
            <person name="Vaezzadeh A.R."/>
            <person name="Deshusses J."/>
            <person name="Lescuyer P."/>
            <person name="Hochstrasser D.F."/>
        </authorList>
    </citation>
    <scope>IDENTIFICATION BY MASS SPECTROMETRY [LARGE SCALE ANALYSIS]</scope>
    <source>
        <strain>N315</strain>
    </source>
</reference>
<protein>
    <recommendedName>
        <fullName>Putative peptidyl-prolyl cis-trans isomerase</fullName>
        <shortName>PPIase</shortName>
        <ecNumber>5.2.1.8</ecNumber>
    </recommendedName>
    <alternativeName>
        <fullName>Rotamase</fullName>
    </alternativeName>
</protein>
<feature type="chain" id="PRO_0000299084" description="Putative peptidyl-prolyl cis-trans isomerase">
    <location>
        <begin position="1"/>
        <end position="197"/>
    </location>
</feature>
<feature type="domain" description="PPIase cyclophilin-type" evidence="2">
    <location>
        <begin position="14"/>
        <end position="195"/>
    </location>
</feature>
<accession>Q7A6I1</accession>
<dbReference type="EC" id="5.2.1.8"/>
<dbReference type="EMBL" id="BA000018">
    <property type="protein sequence ID" value="BAB42054.1"/>
    <property type="molecule type" value="Genomic_DNA"/>
</dbReference>
<dbReference type="PIR" id="C89862">
    <property type="entry name" value="C89862"/>
</dbReference>
<dbReference type="RefSeq" id="WP_000035058.1">
    <property type="nucleotide sequence ID" value="NC_002745.2"/>
</dbReference>
<dbReference type="SMR" id="Q7A6I1"/>
<dbReference type="EnsemblBacteria" id="BAB42054">
    <property type="protein sequence ID" value="BAB42054"/>
    <property type="gene ID" value="BAB42054"/>
</dbReference>
<dbReference type="KEGG" id="sau:SA0815"/>
<dbReference type="HOGENOM" id="CLU_012062_16_0_9"/>
<dbReference type="GO" id="GO:0003755">
    <property type="term" value="F:peptidyl-prolyl cis-trans isomerase activity"/>
    <property type="evidence" value="ECO:0007669"/>
    <property type="project" value="UniProtKB-KW"/>
</dbReference>
<dbReference type="Gene3D" id="2.40.100.10">
    <property type="entry name" value="Cyclophilin-like"/>
    <property type="match status" value="1"/>
</dbReference>
<dbReference type="InterPro" id="IPR029000">
    <property type="entry name" value="Cyclophilin-like_dom_sf"/>
</dbReference>
<dbReference type="InterPro" id="IPR024936">
    <property type="entry name" value="Cyclophilin-type_PPIase"/>
</dbReference>
<dbReference type="InterPro" id="IPR002130">
    <property type="entry name" value="Cyclophilin-type_PPIase_dom"/>
</dbReference>
<dbReference type="InterPro" id="IPR044666">
    <property type="entry name" value="Cyclophilin_A-like"/>
</dbReference>
<dbReference type="PANTHER" id="PTHR45625">
    <property type="entry name" value="PEPTIDYL-PROLYL CIS-TRANS ISOMERASE-RELATED"/>
    <property type="match status" value="1"/>
</dbReference>
<dbReference type="PANTHER" id="PTHR45625:SF4">
    <property type="entry name" value="PEPTIDYLPROLYL ISOMERASE DOMAIN AND WD REPEAT-CONTAINING PROTEIN 1"/>
    <property type="match status" value="1"/>
</dbReference>
<dbReference type="Pfam" id="PF00160">
    <property type="entry name" value="Pro_isomerase"/>
    <property type="match status" value="1"/>
</dbReference>
<dbReference type="PIRSF" id="PIRSF001467">
    <property type="entry name" value="Peptidylpro_ismrse"/>
    <property type="match status" value="1"/>
</dbReference>
<dbReference type="PRINTS" id="PR00153">
    <property type="entry name" value="CSAPPISMRASE"/>
</dbReference>
<dbReference type="SUPFAM" id="SSF50891">
    <property type="entry name" value="Cyclophilin-like"/>
    <property type="match status" value="1"/>
</dbReference>
<dbReference type="PROSITE" id="PS50072">
    <property type="entry name" value="CSA_PPIASE_2"/>
    <property type="match status" value="1"/>
</dbReference>
<name>PPI1_STAAN</name>
<proteinExistence type="evidence at protein level"/>
<gene>
    <name type="ordered locus">SA0815</name>
</gene>